<accession>A8GY43</accession>
<protein>
    <recommendedName>
        <fullName evidence="1">ATP synthase subunit delta</fullName>
    </recommendedName>
    <alternativeName>
        <fullName evidence="1">ATP synthase F(1) sector subunit delta</fullName>
    </alternativeName>
    <alternativeName>
        <fullName evidence="1">F-type ATPase subunit delta</fullName>
        <shortName evidence="1">F-ATPase subunit delta</shortName>
    </alternativeName>
</protein>
<name>ATPD_RICB8</name>
<evidence type="ECO:0000255" key="1">
    <source>
        <dbReference type="HAMAP-Rule" id="MF_01416"/>
    </source>
</evidence>
<feature type="chain" id="PRO_0000371100" description="ATP synthase subunit delta">
    <location>
        <begin position="1"/>
        <end position="189"/>
    </location>
</feature>
<dbReference type="EMBL" id="CP000849">
    <property type="protein sequence ID" value="ABV79793.1"/>
    <property type="molecule type" value="Genomic_DNA"/>
</dbReference>
<dbReference type="RefSeq" id="WP_011476788.1">
    <property type="nucleotide sequence ID" value="NC_009883.1"/>
</dbReference>
<dbReference type="SMR" id="A8GY43"/>
<dbReference type="KEGG" id="rbo:A1I_07475"/>
<dbReference type="HOGENOM" id="CLU_085114_1_1_5"/>
<dbReference type="GO" id="GO:0005886">
    <property type="term" value="C:plasma membrane"/>
    <property type="evidence" value="ECO:0007669"/>
    <property type="project" value="UniProtKB-SubCell"/>
</dbReference>
<dbReference type="GO" id="GO:0045259">
    <property type="term" value="C:proton-transporting ATP synthase complex"/>
    <property type="evidence" value="ECO:0007669"/>
    <property type="project" value="UniProtKB-KW"/>
</dbReference>
<dbReference type="GO" id="GO:0046933">
    <property type="term" value="F:proton-transporting ATP synthase activity, rotational mechanism"/>
    <property type="evidence" value="ECO:0007669"/>
    <property type="project" value="UniProtKB-UniRule"/>
</dbReference>
<dbReference type="Gene3D" id="1.10.520.20">
    <property type="entry name" value="N-terminal domain of the delta subunit of the F1F0-ATP synthase"/>
    <property type="match status" value="1"/>
</dbReference>
<dbReference type="HAMAP" id="MF_01416">
    <property type="entry name" value="ATP_synth_delta_bact"/>
    <property type="match status" value="1"/>
</dbReference>
<dbReference type="InterPro" id="IPR026015">
    <property type="entry name" value="ATP_synth_OSCP/delta_N_sf"/>
</dbReference>
<dbReference type="InterPro" id="IPR000711">
    <property type="entry name" value="ATPase_OSCP/dsu"/>
</dbReference>
<dbReference type="NCBIfam" id="TIGR01145">
    <property type="entry name" value="ATP_synt_delta"/>
    <property type="match status" value="1"/>
</dbReference>
<dbReference type="PANTHER" id="PTHR11910">
    <property type="entry name" value="ATP SYNTHASE DELTA CHAIN"/>
    <property type="match status" value="1"/>
</dbReference>
<dbReference type="Pfam" id="PF00213">
    <property type="entry name" value="OSCP"/>
    <property type="match status" value="1"/>
</dbReference>
<dbReference type="PRINTS" id="PR00125">
    <property type="entry name" value="ATPASEDELTA"/>
</dbReference>
<dbReference type="SUPFAM" id="SSF47928">
    <property type="entry name" value="N-terminal domain of the delta subunit of the F1F0-ATP synthase"/>
    <property type="match status" value="1"/>
</dbReference>
<organism>
    <name type="scientific">Rickettsia bellii (strain OSU 85-389)</name>
    <dbReference type="NCBI Taxonomy" id="391896"/>
    <lineage>
        <taxon>Bacteria</taxon>
        <taxon>Pseudomonadati</taxon>
        <taxon>Pseudomonadota</taxon>
        <taxon>Alphaproteobacteria</taxon>
        <taxon>Rickettsiales</taxon>
        <taxon>Rickettsiaceae</taxon>
        <taxon>Rickettsieae</taxon>
        <taxon>Rickettsia</taxon>
        <taxon>belli group</taxon>
    </lineage>
</organism>
<gene>
    <name evidence="1" type="primary">atpH</name>
    <name type="ordered locus">A1I_07475</name>
</gene>
<keyword id="KW-0066">ATP synthesis</keyword>
<keyword id="KW-0997">Cell inner membrane</keyword>
<keyword id="KW-1003">Cell membrane</keyword>
<keyword id="KW-0139">CF(1)</keyword>
<keyword id="KW-0375">Hydrogen ion transport</keyword>
<keyword id="KW-0406">Ion transport</keyword>
<keyword id="KW-0472">Membrane</keyword>
<keyword id="KW-0813">Transport</keyword>
<proteinExistence type="inferred from homology"/>
<sequence>MNKDILTQNYAVALFDNAKSDNTQDKILEEVNLVTSIIEDNIEVKELLSSPIVNKVDKIGVINSLVKNIKISKIMQNFLLLLIKNSRTSILADIANTYSKLLYESKNIKIVQVISANKLKPTEQEWVKTNIEKELKQETKINFEIDPTIMGGIVIKYDSILQDYSIKGSLDKIAKALQSVNVFDCHPVA</sequence>
<comment type="function">
    <text evidence="1">F(1)F(0) ATP synthase produces ATP from ADP in the presence of a proton or sodium gradient. F-type ATPases consist of two structural domains, F(1) containing the extramembraneous catalytic core and F(0) containing the membrane proton channel, linked together by a central stalk and a peripheral stalk. During catalysis, ATP synthesis in the catalytic domain of F(1) is coupled via a rotary mechanism of the central stalk subunits to proton translocation.</text>
</comment>
<comment type="function">
    <text evidence="1">This protein is part of the stalk that links CF(0) to CF(1). It either transmits conformational changes from CF(0) to CF(1) or is implicated in proton conduction.</text>
</comment>
<comment type="subunit">
    <text evidence="1">F-type ATPases have 2 components, F(1) - the catalytic core - and F(0) - the membrane proton channel. F(1) has five subunits: alpha(3), beta(3), gamma(1), delta(1), epsilon(1). F(0) has three main subunits: a(1), b(2) and c(10-14). The alpha and beta chains form an alternating ring which encloses part of the gamma chain. F(1) is attached to F(0) by a central stalk formed by the gamma and epsilon chains, while a peripheral stalk is formed by the delta and b chains.</text>
</comment>
<comment type="subcellular location">
    <subcellularLocation>
        <location evidence="1">Cell inner membrane</location>
        <topology evidence="1">Peripheral membrane protein</topology>
    </subcellularLocation>
</comment>
<comment type="similarity">
    <text evidence="1">Belongs to the ATPase delta chain family.</text>
</comment>
<reference key="1">
    <citation type="submission" date="2007-09" db="EMBL/GenBank/DDBJ databases">
        <title>Complete genome sequencing of Rickettsia bellii.</title>
        <authorList>
            <person name="Madan A."/>
            <person name="Lee H."/>
            <person name="Madan A."/>
            <person name="Yoon J.-G."/>
            <person name="Ryu G.-Y."/>
            <person name="Dasch G."/>
            <person name="Ereemeva M."/>
        </authorList>
    </citation>
    <scope>NUCLEOTIDE SEQUENCE [LARGE SCALE GENOMIC DNA]</scope>
    <source>
        <strain>OSU 85-389</strain>
    </source>
</reference>